<protein>
    <recommendedName>
        <fullName>Uncharacterized protein MT0902</fullName>
    </recommendedName>
</protein>
<proteinExistence type="predicted"/>
<evidence type="ECO:0000255" key="1"/>
<evidence type="ECO:0000305" key="2"/>
<keyword id="KW-1003">Cell membrane</keyword>
<keyword id="KW-0472">Membrane</keyword>
<keyword id="KW-1185">Reference proteome</keyword>
<keyword id="KW-0812">Transmembrane</keyword>
<keyword id="KW-1133">Transmembrane helix</keyword>
<organism>
    <name type="scientific">Mycobacterium tuberculosis (strain CDC 1551 / Oshkosh)</name>
    <dbReference type="NCBI Taxonomy" id="83331"/>
    <lineage>
        <taxon>Bacteria</taxon>
        <taxon>Bacillati</taxon>
        <taxon>Actinomycetota</taxon>
        <taxon>Actinomycetes</taxon>
        <taxon>Mycobacteriales</taxon>
        <taxon>Mycobacteriaceae</taxon>
        <taxon>Mycobacterium</taxon>
        <taxon>Mycobacterium tuberculosis complex</taxon>
    </lineage>
</organism>
<feature type="chain" id="PRO_0000427610" description="Uncharacterized protein MT0902">
    <location>
        <begin position="1"/>
        <end position="91"/>
    </location>
</feature>
<feature type="transmembrane region" description="Helical" evidence="1">
    <location>
        <begin position="22"/>
        <end position="42"/>
    </location>
</feature>
<feature type="transmembrane region" description="Helical" evidence="1">
    <location>
        <begin position="53"/>
        <end position="73"/>
    </location>
</feature>
<gene>
    <name type="ordered locus">MT0902</name>
</gene>
<reference key="1">
    <citation type="journal article" date="2002" name="J. Bacteriol.">
        <title>Whole-genome comparison of Mycobacterium tuberculosis clinical and laboratory strains.</title>
        <authorList>
            <person name="Fleischmann R.D."/>
            <person name="Alland D."/>
            <person name="Eisen J.A."/>
            <person name="Carpenter L."/>
            <person name="White O."/>
            <person name="Peterson J.D."/>
            <person name="DeBoy R.T."/>
            <person name="Dodson R.J."/>
            <person name="Gwinn M.L."/>
            <person name="Haft D.H."/>
            <person name="Hickey E.K."/>
            <person name="Kolonay J.F."/>
            <person name="Nelson W.C."/>
            <person name="Umayam L.A."/>
            <person name="Ermolaeva M.D."/>
            <person name="Salzberg S.L."/>
            <person name="Delcher A."/>
            <person name="Utterback T.R."/>
            <person name="Weidman J.F."/>
            <person name="Khouri H.M."/>
            <person name="Gill J."/>
            <person name="Mikula A."/>
            <person name="Bishai W."/>
            <person name="Jacobs W.R. Jr."/>
            <person name="Venter J.C."/>
            <person name="Fraser C.M."/>
        </authorList>
    </citation>
    <scope>NUCLEOTIDE SEQUENCE [LARGE SCALE GENOMIC DNA]</scope>
    <source>
        <strain>CDC 1551 / Oshkosh</strain>
    </source>
</reference>
<name>Y879_MYCTO</name>
<accession>P9WKR0</accession>
<accession>L0T7Z8</accession>
<accession>P64735</accession>
<accession>Q10541</accession>
<dbReference type="EMBL" id="AE000516">
    <property type="protein sequence ID" value="AAK45144.1"/>
    <property type="molecule type" value="Genomic_DNA"/>
</dbReference>
<dbReference type="PIR" id="D70780">
    <property type="entry name" value="D70780"/>
</dbReference>
<dbReference type="RefSeq" id="WP_003404603.1">
    <property type="nucleotide sequence ID" value="NZ_KK341227.1"/>
</dbReference>
<dbReference type="KEGG" id="mtc:MT0902"/>
<dbReference type="PATRIC" id="fig|83331.31.peg.968"/>
<dbReference type="HOGENOM" id="CLU_150710_3_2_11"/>
<dbReference type="Proteomes" id="UP000001020">
    <property type="component" value="Chromosome"/>
</dbReference>
<dbReference type="GO" id="GO:0005886">
    <property type="term" value="C:plasma membrane"/>
    <property type="evidence" value="ECO:0007669"/>
    <property type="project" value="UniProtKB-SubCell"/>
</dbReference>
<dbReference type="InterPro" id="IPR019681">
    <property type="entry name" value="DUF2530"/>
</dbReference>
<dbReference type="Pfam" id="PF10745">
    <property type="entry name" value="DUF2530"/>
    <property type="match status" value="1"/>
</dbReference>
<sequence>MSVENSQIREPPPLPPVLLEVWPVIAVGALAWLVAAVAAFVVPGLASWRPVTVAGLATGLLGTTIFVWQLAAARRGARGAQAGLETYLDPK</sequence>
<comment type="subcellular location">
    <subcellularLocation>
        <location evidence="2">Cell membrane</location>
        <topology evidence="2">Multi-pass membrane protein</topology>
    </subcellularLocation>
</comment>